<feature type="chain" id="PRO_0000159116" description="Ferredoxin">
    <location>
        <begin position="1"/>
        <end position="55"/>
    </location>
</feature>
<feature type="domain" description="4Fe-4S ferredoxin-type 1" evidence="2">
    <location>
        <begin position="2"/>
        <end position="27"/>
    </location>
</feature>
<feature type="domain" description="4Fe-4S ferredoxin-type 2" evidence="2">
    <location>
        <begin position="28"/>
        <end position="55"/>
    </location>
</feature>
<feature type="binding site" evidence="1">
    <location>
        <position position="8"/>
    </location>
    <ligand>
        <name>[4Fe-4S] cluster</name>
        <dbReference type="ChEBI" id="CHEBI:49883"/>
        <label>1</label>
    </ligand>
</feature>
<feature type="binding site" evidence="1">
    <location>
        <position position="11"/>
    </location>
    <ligand>
        <name>[4Fe-4S] cluster</name>
        <dbReference type="ChEBI" id="CHEBI:49883"/>
        <label>1</label>
    </ligand>
</feature>
<feature type="binding site" evidence="1">
    <location>
        <position position="14"/>
    </location>
    <ligand>
        <name>[4Fe-4S] cluster</name>
        <dbReference type="ChEBI" id="CHEBI:49883"/>
        <label>1</label>
    </ligand>
</feature>
<feature type="binding site" evidence="1">
    <location>
        <position position="18"/>
    </location>
    <ligand>
        <name>[4Fe-4S] cluster</name>
        <dbReference type="ChEBI" id="CHEBI:49883"/>
        <label>2</label>
    </ligand>
</feature>
<feature type="binding site" evidence="1">
    <location>
        <position position="37"/>
    </location>
    <ligand>
        <name>[4Fe-4S] cluster</name>
        <dbReference type="ChEBI" id="CHEBI:49883"/>
        <label>2</label>
    </ligand>
</feature>
<feature type="binding site" evidence="1">
    <location>
        <position position="40"/>
    </location>
    <ligand>
        <name>[4Fe-4S] cluster</name>
        <dbReference type="ChEBI" id="CHEBI:49883"/>
        <label>2</label>
    </ligand>
</feature>
<feature type="binding site" evidence="1">
    <location>
        <position position="43"/>
    </location>
    <ligand>
        <name>[4Fe-4S] cluster</name>
        <dbReference type="ChEBI" id="CHEBI:49883"/>
        <label>2</label>
    </ligand>
</feature>
<feature type="binding site" evidence="1">
    <location>
        <position position="47"/>
    </location>
    <ligand>
        <name>[4Fe-4S] cluster</name>
        <dbReference type="ChEBI" id="CHEBI:49883"/>
        <label>1</label>
    </ligand>
</feature>
<feature type="sequence conflict" description="In Ref. 2; AA sequence." evidence="3" ref="2">
    <original>E</original>
    <variation>Q</variation>
    <location>
        <position position="31"/>
    </location>
</feature>
<feature type="sequence conflict" description="In Ref. 2; AA sequence." evidence="3" ref="2">
    <original>E</original>
    <variation>Q</variation>
    <location>
        <position position="44"/>
    </location>
</feature>
<dbReference type="PIR" id="A92138">
    <property type="entry name" value="FECLCT"/>
</dbReference>
<dbReference type="SMR" id="P00200"/>
<dbReference type="OMA" id="VEECPMG"/>
<dbReference type="GO" id="GO:0005737">
    <property type="term" value="C:cytoplasm"/>
    <property type="evidence" value="ECO:0007669"/>
    <property type="project" value="TreeGrafter"/>
</dbReference>
<dbReference type="GO" id="GO:0051539">
    <property type="term" value="F:4 iron, 4 sulfur cluster binding"/>
    <property type="evidence" value="ECO:0007669"/>
    <property type="project" value="UniProtKB-KW"/>
</dbReference>
<dbReference type="GO" id="GO:0009055">
    <property type="term" value="F:electron transfer activity"/>
    <property type="evidence" value="ECO:0007669"/>
    <property type="project" value="InterPro"/>
</dbReference>
<dbReference type="GO" id="GO:0046872">
    <property type="term" value="F:metal ion binding"/>
    <property type="evidence" value="ECO:0007669"/>
    <property type="project" value="UniProtKB-KW"/>
</dbReference>
<dbReference type="Gene3D" id="3.30.70.20">
    <property type="match status" value="1"/>
</dbReference>
<dbReference type="InterPro" id="IPR017896">
    <property type="entry name" value="4Fe4S_Fe-S-bd"/>
</dbReference>
<dbReference type="InterPro" id="IPR017900">
    <property type="entry name" value="4Fe4S_Fe_S_CS"/>
</dbReference>
<dbReference type="InterPro" id="IPR000813">
    <property type="entry name" value="7Fe_ferredoxin"/>
</dbReference>
<dbReference type="InterPro" id="IPR050157">
    <property type="entry name" value="PSI_iron-sulfur_center"/>
</dbReference>
<dbReference type="PANTHER" id="PTHR24960:SF79">
    <property type="entry name" value="PHOTOSYSTEM I IRON-SULFUR CENTER"/>
    <property type="match status" value="1"/>
</dbReference>
<dbReference type="PANTHER" id="PTHR24960">
    <property type="entry name" value="PHOTOSYSTEM I IRON-SULFUR CENTER-RELATED"/>
    <property type="match status" value="1"/>
</dbReference>
<dbReference type="Pfam" id="PF13187">
    <property type="entry name" value="Fer4_9"/>
    <property type="match status" value="1"/>
</dbReference>
<dbReference type="PRINTS" id="PR00354">
    <property type="entry name" value="7FE8SFRDOXIN"/>
</dbReference>
<dbReference type="SUPFAM" id="SSF54862">
    <property type="entry name" value="4Fe-4S ferredoxins"/>
    <property type="match status" value="1"/>
</dbReference>
<dbReference type="PROSITE" id="PS00198">
    <property type="entry name" value="4FE4S_FER_1"/>
    <property type="match status" value="2"/>
</dbReference>
<dbReference type="PROSITE" id="PS51379">
    <property type="entry name" value="4FE4S_FER_2"/>
    <property type="match status" value="2"/>
</dbReference>
<protein>
    <recommendedName>
        <fullName>Ferredoxin</fullName>
    </recommendedName>
</protein>
<proteinExistence type="evidence at protein level"/>
<keyword id="KW-0004">4Fe-4S</keyword>
<keyword id="KW-0903">Direct protein sequencing</keyword>
<keyword id="KW-0249">Electron transport</keyword>
<keyword id="KW-0408">Iron</keyword>
<keyword id="KW-0411">Iron-sulfur</keyword>
<keyword id="KW-0479">Metal-binding</keyword>
<keyword id="KW-0677">Repeat</keyword>
<keyword id="KW-0813">Transport</keyword>
<sequence length="55" mass="5545">AHIITDECISCGACAAECPVEAIHEGTGKYEVDADTCIDCGACEAVCPTGAVKAE</sequence>
<name>FER_THETR</name>
<comment type="function">
    <text>Ferredoxins are iron-sulfur proteins that transfer electrons in a wide variety of metabolic reactions.</text>
</comment>
<comment type="cofactor">
    <cofactor>
        <name>[4Fe-4S] cluster</name>
        <dbReference type="ChEBI" id="CHEBI:49883"/>
    </cofactor>
    <text>Binds 2 [4Fe-4S] clusters.</text>
</comment>
<comment type="caution">
    <text evidence="3">PubMed:4934841 authors considered 'C.tartarivorum' as a separate species.</text>
</comment>
<organism>
    <name type="scientific">Thermoanaerobacterium thermosaccharolyticum</name>
    <name type="common">Clostridium thermosaccharolyticum</name>
    <dbReference type="NCBI Taxonomy" id="1517"/>
    <lineage>
        <taxon>Bacteria</taxon>
        <taxon>Bacillati</taxon>
        <taxon>Bacillota</taxon>
        <taxon>Clostridia</taxon>
        <taxon>Thermoanaerobacterales</taxon>
        <taxon>Thermoanaerobacteraceae</taxon>
        <taxon>Thermoanaerobacterium</taxon>
    </lineage>
</organism>
<accession>P00200</accession>
<accession>P00199</accession>
<evidence type="ECO:0000250" key="1"/>
<evidence type="ECO:0000255" key="2">
    <source>
        <dbReference type="PROSITE-ProRule" id="PRU00711"/>
    </source>
</evidence>
<evidence type="ECO:0000305" key="3"/>
<reference key="1">
    <citation type="journal article" date="1973" name="J. Biol. Chem.">
        <title>The primary structure of the Clostridium thermosaccharolyticum ferredoxin, a heat-stable ferredoxin.</title>
        <authorList>
            <person name="Tanaka M."/>
            <person name="Haniu M."/>
            <person name="Yasunobu K.T."/>
            <person name="Himes R.H."/>
            <person name="Akagi J.M."/>
        </authorList>
    </citation>
    <scope>PROTEIN SEQUENCE</scope>
</reference>
<reference key="2">
    <citation type="journal article" date="1971" name="J. Biol. Chem.">
        <title>The primary structure of the Clostridium tartarivorum ferredoxin, a heat-stable ferredoxin.</title>
        <authorList>
            <person name="Tanaka M."/>
            <person name="Haniu M."/>
            <person name="Matsueda G."/>
            <person name="Yasunobu K.T."/>
            <person name="Himes R.H."/>
            <person name="Akagi J.M."/>
            <person name="Barnes E.M."/>
            <person name="Devanathan T."/>
        </authorList>
    </citation>
    <scope>PROTEIN SEQUENCE</scope>
    <source>
        <strain>Tartarivorum</strain>
    </source>
</reference>